<gene>
    <name evidence="1" type="primary">atpH</name>
    <name type="ordered locus">Exig_2679</name>
</gene>
<proteinExistence type="inferred from homology"/>
<accession>B1YMR7</accession>
<dbReference type="EMBL" id="CP001022">
    <property type="protein sequence ID" value="ACB62127.1"/>
    <property type="molecule type" value="Genomic_DNA"/>
</dbReference>
<dbReference type="RefSeq" id="WP_012371543.1">
    <property type="nucleotide sequence ID" value="NC_010556.1"/>
</dbReference>
<dbReference type="SMR" id="B1YMR7"/>
<dbReference type="STRING" id="262543.Exig_2679"/>
<dbReference type="KEGG" id="esi:Exig_2679"/>
<dbReference type="eggNOG" id="COG0712">
    <property type="taxonomic scope" value="Bacteria"/>
</dbReference>
<dbReference type="HOGENOM" id="CLU_085114_4_1_9"/>
<dbReference type="OrthoDB" id="9802471at2"/>
<dbReference type="Proteomes" id="UP000001681">
    <property type="component" value="Chromosome"/>
</dbReference>
<dbReference type="GO" id="GO:0005886">
    <property type="term" value="C:plasma membrane"/>
    <property type="evidence" value="ECO:0007669"/>
    <property type="project" value="UniProtKB-SubCell"/>
</dbReference>
<dbReference type="GO" id="GO:0045259">
    <property type="term" value="C:proton-transporting ATP synthase complex"/>
    <property type="evidence" value="ECO:0007669"/>
    <property type="project" value="UniProtKB-KW"/>
</dbReference>
<dbReference type="GO" id="GO:0046933">
    <property type="term" value="F:proton-transporting ATP synthase activity, rotational mechanism"/>
    <property type="evidence" value="ECO:0007669"/>
    <property type="project" value="UniProtKB-UniRule"/>
</dbReference>
<dbReference type="Gene3D" id="1.10.520.20">
    <property type="entry name" value="N-terminal domain of the delta subunit of the F1F0-ATP synthase"/>
    <property type="match status" value="1"/>
</dbReference>
<dbReference type="HAMAP" id="MF_01416">
    <property type="entry name" value="ATP_synth_delta_bact"/>
    <property type="match status" value="1"/>
</dbReference>
<dbReference type="InterPro" id="IPR026015">
    <property type="entry name" value="ATP_synth_OSCP/delta_N_sf"/>
</dbReference>
<dbReference type="InterPro" id="IPR020781">
    <property type="entry name" value="ATPase_OSCP/d_CS"/>
</dbReference>
<dbReference type="InterPro" id="IPR000711">
    <property type="entry name" value="ATPase_OSCP/dsu"/>
</dbReference>
<dbReference type="NCBIfam" id="TIGR01145">
    <property type="entry name" value="ATP_synt_delta"/>
    <property type="match status" value="1"/>
</dbReference>
<dbReference type="NCBIfam" id="NF004403">
    <property type="entry name" value="PRK05758.2-4"/>
    <property type="match status" value="1"/>
</dbReference>
<dbReference type="PANTHER" id="PTHR11910">
    <property type="entry name" value="ATP SYNTHASE DELTA CHAIN"/>
    <property type="match status" value="1"/>
</dbReference>
<dbReference type="Pfam" id="PF00213">
    <property type="entry name" value="OSCP"/>
    <property type="match status" value="1"/>
</dbReference>
<dbReference type="PRINTS" id="PR00125">
    <property type="entry name" value="ATPASEDELTA"/>
</dbReference>
<dbReference type="SUPFAM" id="SSF47928">
    <property type="entry name" value="N-terminal domain of the delta subunit of the F1F0-ATP synthase"/>
    <property type="match status" value="1"/>
</dbReference>
<dbReference type="PROSITE" id="PS00389">
    <property type="entry name" value="ATPASE_DELTA"/>
    <property type="match status" value="1"/>
</dbReference>
<name>ATPD_EXIS2</name>
<sequence length="177" mass="19587">MRDHVAGRYAKALFDLALEHHVLDQAEADVRTLGEVLHATPELASVLENPSISAEELKQVLQTSFTGFNTIVLNTILVMVENDRASEVLSLPEHFIALLNEHRNVATAIVTSAYKLSDEELTNVKETFGQKSGKTLEVENVVDTNVIGGLRVQIGYTTYDGTIETKLTRLERELLKA</sequence>
<feature type="chain" id="PRO_0000370981" description="ATP synthase subunit delta">
    <location>
        <begin position="1"/>
        <end position="177"/>
    </location>
</feature>
<reference key="1">
    <citation type="submission" date="2008-04" db="EMBL/GenBank/DDBJ databases">
        <title>Complete sequence of chromosome of Exiguobacterium sibiricum 255-15.</title>
        <authorList>
            <consortium name="US DOE Joint Genome Institute"/>
            <person name="Copeland A."/>
            <person name="Lucas S."/>
            <person name="Lapidus A."/>
            <person name="Glavina del Rio T."/>
            <person name="Dalin E."/>
            <person name="Tice H."/>
            <person name="Bruce D."/>
            <person name="Goodwin L."/>
            <person name="Pitluck S."/>
            <person name="Kiss H."/>
            <person name="Chertkov O."/>
            <person name="Monk C."/>
            <person name="Brettin T."/>
            <person name="Detter J.C."/>
            <person name="Han C."/>
            <person name="Kuske C.R."/>
            <person name="Schmutz J."/>
            <person name="Larimer F."/>
            <person name="Land M."/>
            <person name="Hauser L."/>
            <person name="Kyrpides N."/>
            <person name="Mikhailova N."/>
            <person name="Vishnivetskaya T."/>
            <person name="Rodrigues D.F."/>
            <person name="Gilichinsky D."/>
            <person name="Tiedje J."/>
            <person name="Richardson P."/>
        </authorList>
    </citation>
    <scope>NUCLEOTIDE SEQUENCE [LARGE SCALE GENOMIC DNA]</scope>
    <source>
        <strain>DSM 17290 / CCUG 55495 / CIP 109462 / JCM 13490 / 255-15</strain>
    </source>
</reference>
<keyword id="KW-0066">ATP synthesis</keyword>
<keyword id="KW-1003">Cell membrane</keyword>
<keyword id="KW-0139">CF(1)</keyword>
<keyword id="KW-0375">Hydrogen ion transport</keyword>
<keyword id="KW-0406">Ion transport</keyword>
<keyword id="KW-0472">Membrane</keyword>
<keyword id="KW-1185">Reference proteome</keyword>
<keyword id="KW-0813">Transport</keyword>
<evidence type="ECO:0000255" key="1">
    <source>
        <dbReference type="HAMAP-Rule" id="MF_01416"/>
    </source>
</evidence>
<comment type="function">
    <text evidence="1">F(1)F(0) ATP synthase produces ATP from ADP in the presence of a proton or sodium gradient. F-type ATPases consist of two structural domains, F(1) containing the extramembraneous catalytic core and F(0) containing the membrane proton channel, linked together by a central stalk and a peripheral stalk. During catalysis, ATP synthesis in the catalytic domain of F(1) is coupled via a rotary mechanism of the central stalk subunits to proton translocation.</text>
</comment>
<comment type="function">
    <text evidence="1">This protein is part of the stalk that links CF(0) to CF(1). It either transmits conformational changes from CF(0) to CF(1) or is implicated in proton conduction.</text>
</comment>
<comment type="subunit">
    <text evidence="1">F-type ATPases have 2 components, F(1) - the catalytic core - and F(0) - the membrane proton channel. F(1) has five subunits: alpha(3), beta(3), gamma(1), delta(1), epsilon(1). F(0) has three main subunits: a(1), b(2) and c(10-14). The alpha and beta chains form an alternating ring which encloses part of the gamma chain. F(1) is attached to F(0) by a central stalk formed by the gamma and epsilon chains, while a peripheral stalk is formed by the delta and b chains.</text>
</comment>
<comment type="subcellular location">
    <subcellularLocation>
        <location evidence="1">Cell membrane</location>
        <topology evidence="1">Peripheral membrane protein</topology>
    </subcellularLocation>
</comment>
<comment type="similarity">
    <text evidence="1">Belongs to the ATPase delta chain family.</text>
</comment>
<protein>
    <recommendedName>
        <fullName evidence="1">ATP synthase subunit delta</fullName>
    </recommendedName>
    <alternativeName>
        <fullName evidence="1">ATP synthase F(1) sector subunit delta</fullName>
    </alternativeName>
    <alternativeName>
        <fullName evidence="1">F-type ATPase subunit delta</fullName>
        <shortName evidence="1">F-ATPase subunit delta</shortName>
    </alternativeName>
</protein>
<organism>
    <name type="scientific">Exiguobacterium sibiricum (strain DSM 17290 / CCUG 55495 / CIP 109462 / JCM 13490 / 255-15)</name>
    <dbReference type="NCBI Taxonomy" id="262543"/>
    <lineage>
        <taxon>Bacteria</taxon>
        <taxon>Bacillati</taxon>
        <taxon>Bacillota</taxon>
        <taxon>Bacilli</taxon>
        <taxon>Bacillales</taxon>
        <taxon>Bacillales Family XII. Incertae Sedis</taxon>
        <taxon>Exiguobacterium</taxon>
    </lineage>
</organism>